<sequence>MSSTTKVSSAVMQTYNRFPITATKGKGSFLWDDNGEKYLDYTSGIATCNLGHVPDNVQHAISNQLKDLWHCSNLYHIPSQEKLAALLTEYSCLDQVFFCNSGAEANEAAIKIAKKYAKDKGYDDRTEIITFEQSFHGRTGSTMAATAQEKIHQGFTPLTEGFRYLPFNNKESLSEIDNGKTSAVLLEVIQGEGGIHTAEKDWLKQLAAICKQADILLMIDEIQTGIGRTGSLFAYQPYGIEPDVITVAKGLGSGFPIGAMLAKQHIAASFSPGTHGSTFGGNPVAAAAGIATLKEILSDGFLENCKEGQEELFNQLKSIKEISPLIKDIRGKGYLMGIEVMNQASAWIEKLREKQILVLPAGEKVVRILPPLTTTKEELQICIQALKEVALELGGNTNG</sequence>
<organism>
    <name type="scientific">Oceanobacillus iheyensis (strain DSM 14371 / CIP 107618 / JCM 11309 / KCTC 3954 / HTE831)</name>
    <dbReference type="NCBI Taxonomy" id="221109"/>
    <lineage>
        <taxon>Bacteria</taxon>
        <taxon>Bacillati</taxon>
        <taxon>Bacillota</taxon>
        <taxon>Bacilli</taxon>
        <taxon>Bacillales</taxon>
        <taxon>Bacillaceae</taxon>
        <taxon>Oceanobacillus</taxon>
    </lineage>
</organism>
<name>ARGD_OCEIH</name>
<proteinExistence type="inferred from homology"/>
<comment type="catalytic activity">
    <reaction evidence="1">
        <text>N(2)-acetyl-L-ornithine + 2-oxoglutarate = N-acetyl-L-glutamate 5-semialdehyde + L-glutamate</text>
        <dbReference type="Rhea" id="RHEA:18049"/>
        <dbReference type="ChEBI" id="CHEBI:16810"/>
        <dbReference type="ChEBI" id="CHEBI:29123"/>
        <dbReference type="ChEBI" id="CHEBI:29985"/>
        <dbReference type="ChEBI" id="CHEBI:57805"/>
        <dbReference type="EC" id="2.6.1.11"/>
    </reaction>
</comment>
<comment type="cofactor">
    <cofactor evidence="1">
        <name>pyridoxal 5'-phosphate</name>
        <dbReference type="ChEBI" id="CHEBI:597326"/>
    </cofactor>
    <text evidence="1">Binds 1 pyridoxal phosphate per subunit.</text>
</comment>
<comment type="pathway">
    <text evidence="1">Amino-acid biosynthesis; L-arginine biosynthesis; N(2)-acetyl-L-ornithine from L-glutamate: step 4/4.</text>
</comment>
<comment type="subunit">
    <text evidence="1">Homodimer.</text>
</comment>
<comment type="subcellular location">
    <subcellularLocation>
        <location evidence="1">Cytoplasm</location>
    </subcellularLocation>
</comment>
<comment type="miscellaneous">
    <text evidence="1">May also have succinyldiaminopimelate aminotransferase activity, thus carrying out the corresponding step in lysine biosynthesis.</text>
</comment>
<comment type="similarity">
    <text evidence="1">Belongs to the class-III pyridoxal-phosphate-dependent aminotransferase family. ArgD subfamily.</text>
</comment>
<dbReference type="EC" id="2.6.1.11" evidence="1"/>
<dbReference type="EMBL" id="BA000028">
    <property type="protein sequence ID" value="BAC13034.1"/>
    <property type="molecule type" value="Genomic_DNA"/>
</dbReference>
<dbReference type="RefSeq" id="WP_011065479.1">
    <property type="nucleotide sequence ID" value="NC_004193.1"/>
</dbReference>
<dbReference type="SMR" id="Q8CUM9"/>
<dbReference type="STRING" id="221109.gene:10733316"/>
<dbReference type="KEGG" id="oih:OB1078"/>
<dbReference type="eggNOG" id="COG4992">
    <property type="taxonomic scope" value="Bacteria"/>
</dbReference>
<dbReference type="HOGENOM" id="CLU_016922_10_1_9"/>
<dbReference type="OrthoDB" id="9807885at2"/>
<dbReference type="PhylomeDB" id="Q8CUM9"/>
<dbReference type="UniPathway" id="UPA00068">
    <property type="reaction ID" value="UER00109"/>
</dbReference>
<dbReference type="Proteomes" id="UP000000822">
    <property type="component" value="Chromosome"/>
</dbReference>
<dbReference type="GO" id="GO:0005737">
    <property type="term" value="C:cytoplasm"/>
    <property type="evidence" value="ECO:0007669"/>
    <property type="project" value="UniProtKB-SubCell"/>
</dbReference>
<dbReference type="GO" id="GO:0042802">
    <property type="term" value="F:identical protein binding"/>
    <property type="evidence" value="ECO:0007669"/>
    <property type="project" value="TreeGrafter"/>
</dbReference>
<dbReference type="GO" id="GO:0003992">
    <property type="term" value="F:N2-acetyl-L-ornithine:2-oxoglutarate 5-aminotransferase activity"/>
    <property type="evidence" value="ECO:0007669"/>
    <property type="project" value="UniProtKB-UniRule"/>
</dbReference>
<dbReference type="GO" id="GO:0030170">
    <property type="term" value="F:pyridoxal phosphate binding"/>
    <property type="evidence" value="ECO:0007669"/>
    <property type="project" value="InterPro"/>
</dbReference>
<dbReference type="GO" id="GO:0006526">
    <property type="term" value="P:L-arginine biosynthetic process"/>
    <property type="evidence" value="ECO:0007669"/>
    <property type="project" value="UniProtKB-UniRule"/>
</dbReference>
<dbReference type="CDD" id="cd00610">
    <property type="entry name" value="OAT_like"/>
    <property type="match status" value="1"/>
</dbReference>
<dbReference type="FunFam" id="3.40.640.10:FF:000004">
    <property type="entry name" value="Acetylornithine aminotransferase"/>
    <property type="match status" value="1"/>
</dbReference>
<dbReference type="Gene3D" id="3.90.1150.10">
    <property type="entry name" value="Aspartate Aminotransferase, domain 1"/>
    <property type="match status" value="1"/>
</dbReference>
<dbReference type="Gene3D" id="3.40.640.10">
    <property type="entry name" value="Type I PLP-dependent aspartate aminotransferase-like (Major domain)"/>
    <property type="match status" value="1"/>
</dbReference>
<dbReference type="HAMAP" id="MF_01107">
    <property type="entry name" value="ArgD_aminotrans_3"/>
    <property type="match status" value="1"/>
</dbReference>
<dbReference type="InterPro" id="IPR004636">
    <property type="entry name" value="AcOrn/SuccOrn_fam"/>
</dbReference>
<dbReference type="InterPro" id="IPR005814">
    <property type="entry name" value="Aminotrans_3"/>
</dbReference>
<dbReference type="InterPro" id="IPR049704">
    <property type="entry name" value="Aminotrans_3_PPA_site"/>
</dbReference>
<dbReference type="InterPro" id="IPR050103">
    <property type="entry name" value="Class-III_PLP-dep_AT"/>
</dbReference>
<dbReference type="InterPro" id="IPR015424">
    <property type="entry name" value="PyrdxlP-dep_Trfase"/>
</dbReference>
<dbReference type="InterPro" id="IPR015421">
    <property type="entry name" value="PyrdxlP-dep_Trfase_major"/>
</dbReference>
<dbReference type="InterPro" id="IPR015422">
    <property type="entry name" value="PyrdxlP-dep_Trfase_small"/>
</dbReference>
<dbReference type="NCBIfam" id="TIGR00707">
    <property type="entry name" value="argD"/>
    <property type="match status" value="1"/>
</dbReference>
<dbReference type="NCBIfam" id="NF002325">
    <property type="entry name" value="PRK01278.1"/>
    <property type="match status" value="1"/>
</dbReference>
<dbReference type="NCBIfam" id="NF002797">
    <property type="entry name" value="PRK02936.1"/>
    <property type="match status" value="1"/>
</dbReference>
<dbReference type="PANTHER" id="PTHR11986:SF79">
    <property type="entry name" value="ACETYLORNITHINE AMINOTRANSFERASE, MITOCHONDRIAL"/>
    <property type="match status" value="1"/>
</dbReference>
<dbReference type="PANTHER" id="PTHR11986">
    <property type="entry name" value="AMINOTRANSFERASE CLASS III"/>
    <property type="match status" value="1"/>
</dbReference>
<dbReference type="Pfam" id="PF00202">
    <property type="entry name" value="Aminotran_3"/>
    <property type="match status" value="1"/>
</dbReference>
<dbReference type="PIRSF" id="PIRSF000521">
    <property type="entry name" value="Transaminase_4ab_Lys_Orn"/>
    <property type="match status" value="1"/>
</dbReference>
<dbReference type="SUPFAM" id="SSF53383">
    <property type="entry name" value="PLP-dependent transferases"/>
    <property type="match status" value="1"/>
</dbReference>
<dbReference type="PROSITE" id="PS00600">
    <property type="entry name" value="AA_TRANSFER_CLASS_3"/>
    <property type="match status" value="1"/>
</dbReference>
<accession>Q8CUM9</accession>
<evidence type="ECO:0000255" key="1">
    <source>
        <dbReference type="HAMAP-Rule" id="MF_01107"/>
    </source>
</evidence>
<protein>
    <recommendedName>
        <fullName evidence="1">Acetylornithine aminotransferase</fullName>
        <shortName evidence="1">ACOAT</shortName>
        <ecNumber evidence="1">2.6.1.11</ecNumber>
    </recommendedName>
</protein>
<gene>
    <name evidence="1" type="primary">argD</name>
    <name type="ordered locus">OB1078</name>
</gene>
<feature type="chain" id="PRO_0000112762" description="Acetylornithine aminotransferase">
    <location>
        <begin position="1"/>
        <end position="399"/>
    </location>
</feature>
<feature type="binding site" evidence="1">
    <location>
        <begin position="102"/>
        <end position="103"/>
    </location>
    <ligand>
        <name>pyridoxal 5'-phosphate</name>
        <dbReference type="ChEBI" id="CHEBI:597326"/>
    </ligand>
</feature>
<feature type="binding site" evidence="1">
    <location>
        <position position="135"/>
    </location>
    <ligand>
        <name>pyridoxal 5'-phosphate</name>
        <dbReference type="ChEBI" id="CHEBI:597326"/>
    </ligand>
</feature>
<feature type="binding site" evidence="1">
    <location>
        <position position="138"/>
    </location>
    <ligand>
        <name>N(2)-acetyl-L-ornithine</name>
        <dbReference type="ChEBI" id="CHEBI:57805"/>
    </ligand>
</feature>
<feature type="binding site" evidence="1">
    <location>
        <begin position="220"/>
        <end position="223"/>
    </location>
    <ligand>
        <name>pyridoxal 5'-phosphate</name>
        <dbReference type="ChEBI" id="CHEBI:597326"/>
    </ligand>
</feature>
<feature type="binding site" evidence="1">
    <location>
        <position position="277"/>
    </location>
    <ligand>
        <name>N(2)-acetyl-L-ornithine</name>
        <dbReference type="ChEBI" id="CHEBI:57805"/>
    </ligand>
</feature>
<feature type="binding site" evidence="1">
    <location>
        <position position="278"/>
    </location>
    <ligand>
        <name>pyridoxal 5'-phosphate</name>
        <dbReference type="ChEBI" id="CHEBI:597326"/>
    </ligand>
</feature>
<feature type="modified residue" description="N6-(pyridoxal phosphate)lysine" evidence="1">
    <location>
        <position position="249"/>
    </location>
</feature>
<keyword id="KW-0028">Amino-acid biosynthesis</keyword>
<keyword id="KW-0032">Aminotransferase</keyword>
<keyword id="KW-0055">Arginine biosynthesis</keyword>
<keyword id="KW-0963">Cytoplasm</keyword>
<keyword id="KW-0663">Pyridoxal phosphate</keyword>
<keyword id="KW-1185">Reference proteome</keyword>
<keyword id="KW-0808">Transferase</keyword>
<reference key="1">
    <citation type="journal article" date="2002" name="Nucleic Acids Res.">
        <title>Genome sequence of Oceanobacillus iheyensis isolated from the Iheya Ridge and its unexpected adaptive capabilities to extreme environments.</title>
        <authorList>
            <person name="Takami H."/>
            <person name="Takaki Y."/>
            <person name="Uchiyama I."/>
        </authorList>
    </citation>
    <scope>NUCLEOTIDE SEQUENCE [LARGE SCALE GENOMIC DNA]</scope>
    <source>
        <strain>DSM 14371 / CIP 107618 / JCM 11309 / KCTC 3954 / HTE831</strain>
    </source>
</reference>